<proteinExistence type="inferred from homology"/>
<organism>
    <name type="scientific">Synechococcus sp. (strain ATCC 27144 / PCC 6301 / SAUG 1402/1)</name>
    <name type="common">Anacystis nidulans</name>
    <dbReference type="NCBI Taxonomy" id="269084"/>
    <lineage>
        <taxon>Bacteria</taxon>
        <taxon>Bacillati</taxon>
        <taxon>Cyanobacteriota</taxon>
        <taxon>Cyanophyceae</taxon>
        <taxon>Synechococcales</taxon>
        <taxon>Synechococcaceae</taxon>
        <taxon>Synechococcus</taxon>
    </lineage>
</organism>
<dbReference type="EC" id="2.7.7.6" evidence="1"/>
<dbReference type="EMBL" id="AP008231">
    <property type="protein sequence ID" value="BAD80698.1"/>
    <property type="molecule type" value="Genomic_DNA"/>
</dbReference>
<dbReference type="SMR" id="Q5MZ22"/>
<dbReference type="KEGG" id="syc:syc2508_d"/>
<dbReference type="eggNOG" id="COG0086">
    <property type="taxonomic scope" value="Bacteria"/>
</dbReference>
<dbReference type="Proteomes" id="UP000001175">
    <property type="component" value="Chromosome"/>
</dbReference>
<dbReference type="GO" id="GO:0000428">
    <property type="term" value="C:DNA-directed RNA polymerase complex"/>
    <property type="evidence" value="ECO:0007669"/>
    <property type="project" value="UniProtKB-KW"/>
</dbReference>
<dbReference type="GO" id="GO:0003677">
    <property type="term" value="F:DNA binding"/>
    <property type="evidence" value="ECO:0007669"/>
    <property type="project" value="UniProtKB-UniRule"/>
</dbReference>
<dbReference type="GO" id="GO:0003899">
    <property type="term" value="F:DNA-directed RNA polymerase activity"/>
    <property type="evidence" value="ECO:0007669"/>
    <property type="project" value="UniProtKB-UniRule"/>
</dbReference>
<dbReference type="GO" id="GO:0000287">
    <property type="term" value="F:magnesium ion binding"/>
    <property type="evidence" value="ECO:0007669"/>
    <property type="project" value="UniProtKB-UniRule"/>
</dbReference>
<dbReference type="GO" id="GO:0008270">
    <property type="term" value="F:zinc ion binding"/>
    <property type="evidence" value="ECO:0007669"/>
    <property type="project" value="UniProtKB-UniRule"/>
</dbReference>
<dbReference type="GO" id="GO:0006351">
    <property type="term" value="P:DNA-templated transcription"/>
    <property type="evidence" value="ECO:0007669"/>
    <property type="project" value="UniProtKB-UniRule"/>
</dbReference>
<dbReference type="Gene3D" id="1.10.40.90">
    <property type="match status" value="1"/>
</dbReference>
<dbReference type="Gene3D" id="2.40.40.20">
    <property type="match status" value="1"/>
</dbReference>
<dbReference type="Gene3D" id="4.10.860.120">
    <property type="entry name" value="RNA polymerase II, clamp domain"/>
    <property type="match status" value="1"/>
</dbReference>
<dbReference type="Gene3D" id="1.10.274.100">
    <property type="entry name" value="RNA polymerase Rpb1, domain 3"/>
    <property type="match status" value="1"/>
</dbReference>
<dbReference type="HAMAP" id="MF_01323">
    <property type="entry name" value="RNApol_bact_RpoC1"/>
    <property type="match status" value="1"/>
</dbReference>
<dbReference type="InterPro" id="IPR012755">
    <property type="entry name" value="DNA-dir_RpoC1_gamma"/>
</dbReference>
<dbReference type="InterPro" id="IPR045867">
    <property type="entry name" value="DNA-dir_RpoC_beta_prime"/>
</dbReference>
<dbReference type="InterPro" id="IPR000722">
    <property type="entry name" value="RNA_pol_asu"/>
</dbReference>
<dbReference type="InterPro" id="IPR006592">
    <property type="entry name" value="RNA_pol_N"/>
</dbReference>
<dbReference type="InterPro" id="IPR007080">
    <property type="entry name" value="RNA_pol_Rpb1_1"/>
</dbReference>
<dbReference type="InterPro" id="IPR007066">
    <property type="entry name" value="RNA_pol_Rpb1_3"/>
</dbReference>
<dbReference type="InterPro" id="IPR042102">
    <property type="entry name" value="RNA_pol_Rpb1_3_sf"/>
</dbReference>
<dbReference type="InterPro" id="IPR044893">
    <property type="entry name" value="RNA_pol_Rpb1_clamp_domain"/>
</dbReference>
<dbReference type="InterPro" id="IPR034678">
    <property type="entry name" value="RNApol_RpoC1"/>
</dbReference>
<dbReference type="NCBIfam" id="NF002729">
    <property type="entry name" value="PRK02625.1"/>
    <property type="match status" value="1"/>
</dbReference>
<dbReference type="NCBIfam" id="TIGR02387">
    <property type="entry name" value="rpoC1_cyan"/>
    <property type="match status" value="1"/>
</dbReference>
<dbReference type="PANTHER" id="PTHR19376">
    <property type="entry name" value="DNA-DIRECTED RNA POLYMERASE"/>
    <property type="match status" value="1"/>
</dbReference>
<dbReference type="PANTHER" id="PTHR19376:SF54">
    <property type="entry name" value="DNA-DIRECTED RNA POLYMERASE SUBUNIT BETA"/>
    <property type="match status" value="1"/>
</dbReference>
<dbReference type="Pfam" id="PF04997">
    <property type="entry name" value="RNA_pol_Rpb1_1"/>
    <property type="match status" value="1"/>
</dbReference>
<dbReference type="Pfam" id="PF00623">
    <property type="entry name" value="RNA_pol_Rpb1_2"/>
    <property type="match status" value="2"/>
</dbReference>
<dbReference type="Pfam" id="PF04983">
    <property type="entry name" value="RNA_pol_Rpb1_3"/>
    <property type="match status" value="1"/>
</dbReference>
<dbReference type="SMART" id="SM00663">
    <property type="entry name" value="RPOLA_N"/>
    <property type="match status" value="1"/>
</dbReference>
<dbReference type="SUPFAM" id="SSF64484">
    <property type="entry name" value="beta and beta-prime subunits of DNA dependent RNA-polymerase"/>
    <property type="match status" value="1"/>
</dbReference>
<feature type="chain" id="PRO_0000225317" description="DNA-directed RNA polymerase subunit gamma">
    <location>
        <begin position="1"/>
        <end position="624"/>
    </location>
</feature>
<feature type="binding site" evidence="1">
    <location>
        <position position="70"/>
    </location>
    <ligand>
        <name>Zn(2+)</name>
        <dbReference type="ChEBI" id="CHEBI:29105"/>
    </ligand>
</feature>
<feature type="binding site" evidence="1">
    <location>
        <position position="72"/>
    </location>
    <ligand>
        <name>Zn(2+)</name>
        <dbReference type="ChEBI" id="CHEBI:29105"/>
    </ligand>
</feature>
<feature type="binding site" evidence="1">
    <location>
        <position position="85"/>
    </location>
    <ligand>
        <name>Zn(2+)</name>
        <dbReference type="ChEBI" id="CHEBI:29105"/>
    </ligand>
</feature>
<feature type="binding site" evidence="1">
    <location>
        <position position="88"/>
    </location>
    <ligand>
        <name>Zn(2+)</name>
        <dbReference type="ChEBI" id="CHEBI:29105"/>
    </ligand>
</feature>
<feature type="binding site" evidence="1">
    <location>
        <position position="466"/>
    </location>
    <ligand>
        <name>Mg(2+)</name>
        <dbReference type="ChEBI" id="CHEBI:18420"/>
    </ligand>
</feature>
<feature type="binding site" evidence="1">
    <location>
        <position position="468"/>
    </location>
    <ligand>
        <name>Mg(2+)</name>
        <dbReference type="ChEBI" id="CHEBI:18420"/>
    </ligand>
</feature>
<feature type="binding site" evidence="1">
    <location>
        <position position="470"/>
    </location>
    <ligand>
        <name>Mg(2+)</name>
        <dbReference type="ChEBI" id="CHEBI:18420"/>
    </ligand>
</feature>
<keyword id="KW-0240">DNA-directed RNA polymerase</keyword>
<keyword id="KW-0460">Magnesium</keyword>
<keyword id="KW-0479">Metal-binding</keyword>
<keyword id="KW-0548">Nucleotidyltransferase</keyword>
<keyword id="KW-0804">Transcription</keyword>
<keyword id="KW-0808">Transferase</keyword>
<keyword id="KW-0862">Zinc</keyword>
<gene>
    <name evidence="1" type="primary">rpoC1</name>
    <name type="ordered locus">syc2508_d</name>
</gene>
<name>RPOC1_SYNP6</name>
<comment type="function">
    <text evidence="1">DNA-dependent RNA polymerase catalyzes the transcription of DNA into RNA using the four ribonucleoside triphosphates as substrates.</text>
</comment>
<comment type="catalytic activity">
    <reaction evidence="1">
        <text>RNA(n) + a ribonucleoside 5'-triphosphate = RNA(n+1) + diphosphate</text>
        <dbReference type="Rhea" id="RHEA:21248"/>
        <dbReference type="Rhea" id="RHEA-COMP:14527"/>
        <dbReference type="Rhea" id="RHEA-COMP:17342"/>
        <dbReference type="ChEBI" id="CHEBI:33019"/>
        <dbReference type="ChEBI" id="CHEBI:61557"/>
        <dbReference type="ChEBI" id="CHEBI:140395"/>
        <dbReference type="EC" id="2.7.7.6"/>
    </reaction>
</comment>
<comment type="cofactor">
    <cofactor evidence="1">
        <name>Mg(2+)</name>
        <dbReference type="ChEBI" id="CHEBI:18420"/>
    </cofactor>
    <text evidence="1">Binds 1 Mg(2+) ion per subunit.</text>
</comment>
<comment type="cofactor">
    <cofactor evidence="1">
        <name>Zn(2+)</name>
        <dbReference type="ChEBI" id="CHEBI:29105"/>
    </cofactor>
    <text evidence="1">Binds 1 Zn(2+) ion per subunit.</text>
</comment>
<comment type="subunit">
    <text evidence="1">In cyanobacteria the RNAP catalytic core is composed of 2 alpha, 1 beta, 1 beta', 1 gamma and 1 omega subunit. When a sigma factor is associated with the core the holoenzyme is formed, which can initiate transcription.</text>
</comment>
<comment type="similarity">
    <text evidence="1">Belongs to the RNA polymerase beta' chain family. RpoC1 subfamily.</text>
</comment>
<sequence length="624" mass="70970">MAKQEQRFDYVKIALASPERIRQWGERTLPNGQVVGEVTKPETINYRTLKPEMDGLFCEKIFGPAKDWECHCGKYKRVQHRGIVCERCGVEVTEPRVRRHRMGFIKLAAPVAHVWYLKGIPSYIAILLDMPLRDVEQIVYFNSYVVLNPDNHSELQYKQLLNEDQWMEIEDQIYAEESDLEGIEVGIGAEALQQLLQDLNLNEESEKLRQEIAESKGQKRAKLIKRLRVIDNFIGTESRPEWMVLNVIPVIPPDLRPMVQLDGGRFATSDLNDLYRRVINRNNRLARLQEILAPEIIVRNEKRMLQEAVDALIDNGRRGRTVVGANNRPLKSLSDIIEGKQGRFRQNLLGKRVDYSGRSVIVVGPNLKIHQCGLPREMAIELFQPFVIHRLIKNHSINNIKQAKKLIQKNDPLIWDVLEEVIEGHPVMLNRAPTLHRLGIQAFEPILVEGRAIQLHPLVCPAFNADFDGDQMAVHVPLSIEAQAEARMLMLASGNILSPATGQPIVTPSQDMVLGCYYLTAENPGAQKGAGRYFANLEDAIRAFEQGSVDLHAWVWVRFDGEVESEGESDEPESVVAADDGTVTKTYRFRRIRETEDGQRLSQYVKTAPGRILFNNTVQTALIH</sequence>
<accession>Q5MZ22</accession>
<reference key="1">
    <citation type="journal article" date="2007" name="Photosyn. Res.">
        <title>Complete nucleotide sequence of the freshwater unicellular cyanobacterium Synechococcus elongatus PCC 6301 chromosome: gene content and organization.</title>
        <authorList>
            <person name="Sugita C."/>
            <person name="Ogata K."/>
            <person name="Shikata M."/>
            <person name="Jikuya H."/>
            <person name="Takano J."/>
            <person name="Furumichi M."/>
            <person name="Kanehisa M."/>
            <person name="Omata T."/>
            <person name="Sugiura M."/>
            <person name="Sugita M."/>
        </authorList>
    </citation>
    <scope>NUCLEOTIDE SEQUENCE [LARGE SCALE GENOMIC DNA]</scope>
    <source>
        <strain>ATCC 27144 / PCC 6301 / SAUG 1402/1</strain>
    </source>
</reference>
<protein>
    <recommendedName>
        <fullName evidence="1">DNA-directed RNA polymerase subunit gamma</fullName>
        <shortName evidence="1">RNAP subunit gamma</shortName>
        <ecNumber evidence="1">2.7.7.6</ecNumber>
    </recommendedName>
    <alternativeName>
        <fullName evidence="1">RNA polymerase subunit gamma</fullName>
    </alternativeName>
    <alternativeName>
        <fullName evidence="1">Transcriptase subunit gamma</fullName>
    </alternativeName>
</protein>
<evidence type="ECO:0000255" key="1">
    <source>
        <dbReference type="HAMAP-Rule" id="MF_01323"/>
    </source>
</evidence>